<name>RGS2_RAT</name>
<protein>
    <recommendedName>
        <fullName>Regulator of G-protein signaling 2</fullName>
        <shortName>RGS2</shortName>
    </recommendedName>
</protein>
<dbReference type="EMBL" id="AF279918">
    <property type="protein sequence ID" value="AAF85981.1"/>
    <property type="molecule type" value="mRNA"/>
</dbReference>
<dbReference type="EMBL" id="AF321837">
    <property type="protein sequence ID" value="AAK09375.1"/>
    <property type="molecule type" value="mRNA"/>
</dbReference>
<dbReference type="EMBL" id="AY043246">
    <property type="protein sequence ID" value="AAK85309.1"/>
    <property type="molecule type" value="mRNA"/>
</dbReference>
<dbReference type="EMBL" id="BC061969">
    <property type="protein sequence ID" value="AAH61969.1"/>
    <property type="molecule type" value="mRNA"/>
</dbReference>
<dbReference type="EMBL" id="AJ318489">
    <property type="protein sequence ID" value="CAC44900.1"/>
    <property type="molecule type" value="mRNA"/>
</dbReference>
<dbReference type="RefSeq" id="NP_445905.1">
    <property type="nucleotide sequence ID" value="NM_053453.2"/>
</dbReference>
<dbReference type="SMR" id="Q9JHX0"/>
<dbReference type="FunCoup" id="Q9JHX0">
    <property type="interactions" value="1358"/>
</dbReference>
<dbReference type="STRING" id="10116.ENSRNOP00000005156"/>
<dbReference type="GlyGen" id="Q9JHX0">
    <property type="glycosylation" value="1 site"/>
</dbReference>
<dbReference type="PhosphoSitePlus" id="Q9JHX0"/>
<dbReference type="PaxDb" id="10116-ENSRNOP00000005156"/>
<dbReference type="Ensembl" id="ENSRNOT00000005156.7">
    <property type="protein sequence ID" value="ENSRNOP00000005156.3"/>
    <property type="gene ID" value="ENSRNOG00000003687.7"/>
</dbReference>
<dbReference type="GeneID" id="84583"/>
<dbReference type="KEGG" id="rno:84583"/>
<dbReference type="UCSC" id="RGD:621665">
    <property type="organism name" value="rat"/>
</dbReference>
<dbReference type="AGR" id="RGD:621665"/>
<dbReference type="CTD" id="5997"/>
<dbReference type="RGD" id="621665">
    <property type="gene designation" value="Rgs2"/>
</dbReference>
<dbReference type="eggNOG" id="KOG3589">
    <property type="taxonomic scope" value="Eukaryota"/>
</dbReference>
<dbReference type="GeneTree" id="ENSGT00940000157937"/>
<dbReference type="HOGENOM" id="CLU_059863_3_2_1"/>
<dbReference type="InParanoid" id="Q9JHX0"/>
<dbReference type="OMA" id="GRMKRTI"/>
<dbReference type="OrthoDB" id="196547at2759"/>
<dbReference type="PhylomeDB" id="Q9JHX0"/>
<dbReference type="TreeFam" id="TF315837"/>
<dbReference type="Reactome" id="R-RNO-416476">
    <property type="pathway name" value="G alpha (q) signalling events"/>
</dbReference>
<dbReference type="PRO" id="PR:Q9JHX0"/>
<dbReference type="Proteomes" id="UP000002494">
    <property type="component" value="Chromosome 13"/>
</dbReference>
<dbReference type="Bgee" id="ENSRNOG00000003687">
    <property type="expression patterns" value="Expressed in lung and 20 other cell types or tissues"/>
</dbReference>
<dbReference type="GO" id="GO:0005737">
    <property type="term" value="C:cytoplasm"/>
    <property type="evidence" value="ECO:0000250"/>
    <property type="project" value="UniProtKB"/>
</dbReference>
<dbReference type="GO" id="GO:0009898">
    <property type="term" value="C:cytoplasmic side of plasma membrane"/>
    <property type="evidence" value="ECO:0000314"/>
    <property type="project" value="BHF-UCL"/>
</dbReference>
<dbReference type="GO" id="GO:0005829">
    <property type="term" value="C:cytosol"/>
    <property type="evidence" value="ECO:0000266"/>
    <property type="project" value="RGD"/>
</dbReference>
<dbReference type="GO" id="GO:0005730">
    <property type="term" value="C:nucleolus"/>
    <property type="evidence" value="ECO:0007669"/>
    <property type="project" value="UniProtKB-SubCell"/>
</dbReference>
<dbReference type="GO" id="GO:0005634">
    <property type="term" value="C:nucleus"/>
    <property type="evidence" value="ECO:0000250"/>
    <property type="project" value="UniProtKB"/>
</dbReference>
<dbReference type="GO" id="GO:0005886">
    <property type="term" value="C:plasma membrane"/>
    <property type="evidence" value="ECO:0000266"/>
    <property type="project" value="RGD"/>
</dbReference>
<dbReference type="GO" id="GO:0010855">
    <property type="term" value="F:adenylate cyclase inhibitor activity"/>
    <property type="evidence" value="ECO:0000266"/>
    <property type="project" value="RGD"/>
</dbReference>
<dbReference type="GO" id="GO:0048487">
    <property type="term" value="F:beta-tubulin binding"/>
    <property type="evidence" value="ECO:0000353"/>
    <property type="project" value="RGD"/>
</dbReference>
<dbReference type="GO" id="GO:0001965">
    <property type="term" value="F:G-protein alpha-subunit binding"/>
    <property type="evidence" value="ECO:0000266"/>
    <property type="project" value="RGD"/>
</dbReference>
<dbReference type="GO" id="GO:0005096">
    <property type="term" value="F:GTPase activator activity"/>
    <property type="evidence" value="ECO:0000250"/>
    <property type="project" value="UniProtKB"/>
</dbReference>
<dbReference type="GO" id="GO:0050873">
    <property type="term" value="P:brown fat cell differentiation"/>
    <property type="evidence" value="ECO:0000266"/>
    <property type="project" value="RGD"/>
</dbReference>
<dbReference type="GO" id="GO:0060135">
    <property type="term" value="P:maternal process involved in female pregnancy"/>
    <property type="evidence" value="ECO:0000270"/>
    <property type="project" value="RGD"/>
</dbReference>
<dbReference type="GO" id="GO:0010614">
    <property type="term" value="P:negative regulation of cardiac muscle hypertrophy"/>
    <property type="evidence" value="ECO:0000266"/>
    <property type="project" value="RGD"/>
</dbReference>
<dbReference type="GO" id="GO:0061052">
    <property type="term" value="P:negative regulation of cell growth involved in cardiac muscle cell development"/>
    <property type="evidence" value="ECO:0000315"/>
    <property type="project" value="RGD"/>
</dbReference>
<dbReference type="GO" id="GO:0045744">
    <property type="term" value="P:negative regulation of G protein-coupled receptor signaling pathway"/>
    <property type="evidence" value="ECO:0000315"/>
    <property type="project" value="RGD"/>
</dbReference>
<dbReference type="GO" id="GO:1900924">
    <property type="term" value="P:negative regulation of glycine import across plasma membrane"/>
    <property type="evidence" value="ECO:0000315"/>
    <property type="project" value="RGD"/>
</dbReference>
<dbReference type="GO" id="GO:0017148">
    <property type="term" value="P:negative regulation of translation"/>
    <property type="evidence" value="ECO:0000315"/>
    <property type="project" value="RGD"/>
</dbReference>
<dbReference type="GO" id="GO:0060452">
    <property type="term" value="P:positive regulation of cardiac muscle contraction"/>
    <property type="evidence" value="ECO:0000266"/>
    <property type="project" value="RGD"/>
</dbReference>
<dbReference type="GO" id="GO:0010976">
    <property type="term" value="P:positive regulation of neuron projection development"/>
    <property type="evidence" value="ECO:0000315"/>
    <property type="project" value="RGD"/>
</dbReference>
<dbReference type="GO" id="GO:0071877">
    <property type="term" value="P:regulation of adenylate cyclase-inhibiting adrenergic receptor signaling pathway"/>
    <property type="evidence" value="ECO:0000266"/>
    <property type="project" value="RGD"/>
</dbReference>
<dbReference type="GO" id="GO:0055119">
    <property type="term" value="P:relaxation of cardiac muscle"/>
    <property type="evidence" value="ECO:0000266"/>
    <property type="project" value="RGD"/>
</dbReference>
<dbReference type="GO" id="GO:0060087">
    <property type="term" value="P:relaxation of vascular associated smooth muscle"/>
    <property type="evidence" value="ECO:0000266"/>
    <property type="project" value="RGD"/>
</dbReference>
<dbReference type="GO" id="GO:0001975">
    <property type="term" value="P:response to amphetamine"/>
    <property type="evidence" value="ECO:0000270"/>
    <property type="project" value="RGD"/>
</dbReference>
<dbReference type="GO" id="GO:0045471">
    <property type="term" value="P:response to ethanol"/>
    <property type="evidence" value="ECO:0000270"/>
    <property type="project" value="RGD"/>
</dbReference>
<dbReference type="GO" id="GO:0007283">
    <property type="term" value="P:spermatogenesis"/>
    <property type="evidence" value="ECO:0000266"/>
    <property type="project" value="RGD"/>
</dbReference>
<dbReference type="CDD" id="cd08709">
    <property type="entry name" value="RGS_RGS2"/>
    <property type="match status" value="1"/>
</dbReference>
<dbReference type="FunFam" id="1.10.167.10:FF:000001">
    <property type="entry name" value="Putative regulator of g-protein signaling 12"/>
    <property type="match status" value="1"/>
</dbReference>
<dbReference type="FunFam" id="1.10.196.10:FF:000001">
    <property type="entry name" value="Regulator of G-protein signaling 8"/>
    <property type="match status" value="1"/>
</dbReference>
<dbReference type="Gene3D" id="1.10.196.10">
    <property type="match status" value="1"/>
</dbReference>
<dbReference type="Gene3D" id="1.10.167.10">
    <property type="entry name" value="Regulator of G-protein Signalling 4, domain 2"/>
    <property type="match status" value="1"/>
</dbReference>
<dbReference type="InterPro" id="IPR016137">
    <property type="entry name" value="RGS"/>
</dbReference>
<dbReference type="InterPro" id="IPR034947">
    <property type="entry name" value="RGS2_RGS"/>
</dbReference>
<dbReference type="InterPro" id="IPR036305">
    <property type="entry name" value="RGS_sf"/>
</dbReference>
<dbReference type="InterPro" id="IPR024066">
    <property type="entry name" value="RGS_subdom1/3"/>
</dbReference>
<dbReference type="InterPro" id="IPR044926">
    <property type="entry name" value="RGS_subdomain_2"/>
</dbReference>
<dbReference type="PANTHER" id="PTHR10845">
    <property type="entry name" value="REGULATOR OF G PROTEIN SIGNALING"/>
    <property type="match status" value="1"/>
</dbReference>
<dbReference type="PANTHER" id="PTHR10845:SF43">
    <property type="entry name" value="REGULATOR OF G-PROTEIN SIGNALING 2"/>
    <property type="match status" value="1"/>
</dbReference>
<dbReference type="Pfam" id="PF00615">
    <property type="entry name" value="RGS"/>
    <property type="match status" value="1"/>
</dbReference>
<dbReference type="PRINTS" id="PR01301">
    <property type="entry name" value="RGSPROTEIN"/>
</dbReference>
<dbReference type="SMART" id="SM00315">
    <property type="entry name" value="RGS"/>
    <property type="match status" value="1"/>
</dbReference>
<dbReference type="SUPFAM" id="SSF48097">
    <property type="entry name" value="Regulator of G-protein signaling, RGS"/>
    <property type="match status" value="1"/>
</dbReference>
<dbReference type="PROSITE" id="PS50132">
    <property type="entry name" value="RGS"/>
    <property type="match status" value="1"/>
</dbReference>
<reference key="1">
    <citation type="journal article" date="2000" name="Mol. Pharmacol.">
        <title>Specific regulation of RGS2 messenger RNA by angiotensin II in cultured vascular smooth muscle cells.</title>
        <authorList>
            <person name="Grant S.L."/>
            <person name="Lassegue B."/>
            <person name="Griendling K.K."/>
            <person name="Ushio-Fukai M."/>
            <person name="Lyons P.R."/>
            <person name="Alexander R.W."/>
        </authorList>
    </citation>
    <scope>NUCLEOTIDE SEQUENCE [MRNA]</scope>
    <source>
        <strain>Sprague-Dawley</strain>
        <tissue>Thoracic aorta</tissue>
    </source>
</reference>
<reference key="2">
    <citation type="submission" date="2000-11" db="EMBL/GenBank/DDBJ databases">
        <title>A detailed distribution study of RGS2 messenger RNA and protein in the rat brain.</title>
        <authorList>
            <person name="Taymans J.-M."/>
            <person name="Wintmolders C."/>
            <person name="Te Riele P."/>
            <person name="Jurzak M."/>
            <person name="Groenewegen H.J."/>
            <person name="Leysen J.E."/>
            <person name="Langlois X."/>
        </authorList>
    </citation>
    <scope>NUCLEOTIDE SEQUENCE [MRNA]</scope>
    <source>
        <strain>Wistar</strain>
        <tissue>Brain</tissue>
    </source>
</reference>
<reference key="3">
    <citation type="submission" date="2001-07" db="EMBL/GenBank/DDBJ databases">
        <title>PTH induced RGS cDNA sequence in rat osteoblast-like UMR106 cell.</title>
        <authorList>
            <person name="Ko J.K."/>
            <person name="Kim I.S."/>
            <person name="Park D.H."/>
        </authorList>
    </citation>
    <scope>NUCLEOTIDE SEQUENCE [MRNA]</scope>
</reference>
<reference key="4">
    <citation type="journal article" date="2004" name="Genome Res.">
        <title>The status, quality, and expansion of the NIH full-length cDNA project: the Mammalian Gene Collection (MGC).</title>
        <authorList>
            <consortium name="The MGC Project Team"/>
        </authorList>
    </citation>
    <scope>NUCLEOTIDE SEQUENCE [LARGE SCALE MRNA]</scope>
    <source>
        <tissue>Prostate</tissue>
    </source>
</reference>
<reference key="5">
    <citation type="journal article" date="2001" name="NeuroReport">
        <title>Different regulation of RGS2 mRNA by haloperidol and clozapine.</title>
        <authorList>
            <person name="Robinet E.A."/>
            <person name="Wurch T."/>
            <person name="Pauwels P.J."/>
        </authorList>
    </citation>
    <scope>NUCLEOTIDE SEQUENCE [MRNA] OF 1-100</scope>
    <source>
        <strain>Sprague-Dawley</strain>
        <tissue>Brain</tissue>
    </source>
</reference>
<accession>Q9JHX0</accession>
<organism>
    <name type="scientific">Rattus norvegicus</name>
    <name type="common">Rat</name>
    <dbReference type="NCBI Taxonomy" id="10116"/>
    <lineage>
        <taxon>Eukaryota</taxon>
        <taxon>Metazoa</taxon>
        <taxon>Chordata</taxon>
        <taxon>Craniata</taxon>
        <taxon>Vertebrata</taxon>
        <taxon>Euteleostomi</taxon>
        <taxon>Mammalia</taxon>
        <taxon>Eutheria</taxon>
        <taxon>Euarchontoglires</taxon>
        <taxon>Glires</taxon>
        <taxon>Rodentia</taxon>
        <taxon>Myomorpha</taxon>
        <taxon>Muroidea</taxon>
        <taxon>Muridae</taxon>
        <taxon>Murinae</taxon>
        <taxon>Rattus</taxon>
    </lineage>
</organism>
<comment type="function">
    <text evidence="1 2">Regulates G protein-coupled receptor signaling cascades. Inhibits signal transduction by increasing the GTPase activity of G protein alpha subunits, thereby driving them into their inactive GDP-bound form (By similarity). It is involved in the negative regulation of the angiotensin-activated signaling pathway (By similarity). Plays a role in the regulation of blood pressure in response to signaling via G protein-coupled receptors and GNAQ. Plays a role in regulating the constriction and relaxation of vascular smooth muscle (By similarity). Binds EIF2B5 and blocks its activity, thereby inhibiting the translation of mRNA into protein (By similarity).</text>
</comment>
<comment type="subunit">
    <text evidence="2">Interacts with GNAQ. Does not interact with GNAI1 and GNAI3. Interacts with EIF2B5. Interacts with PRKG1 (isoform alpha).</text>
</comment>
<comment type="subcellular location">
    <subcellularLocation>
        <location evidence="2">Cell membrane</location>
    </subcellularLocation>
    <subcellularLocation>
        <location evidence="2">Cytoplasm</location>
    </subcellularLocation>
    <subcellularLocation>
        <location evidence="2">Nucleus</location>
        <location evidence="2">Nucleolus</location>
    </subcellularLocation>
</comment>
<comment type="PTM">
    <text evidence="2">Phosphorylated by protein kinase C. Phosphorylation by PRKG1 leads to activation of RGS2 activity.</text>
</comment>
<evidence type="ECO:0000250" key="1">
    <source>
        <dbReference type="UniProtKB" id="O08849"/>
    </source>
</evidence>
<evidence type="ECO:0000250" key="2">
    <source>
        <dbReference type="UniProtKB" id="P41220"/>
    </source>
</evidence>
<evidence type="ECO:0000255" key="3">
    <source>
        <dbReference type="PROSITE-ProRule" id="PRU00171"/>
    </source>
</evidence>
<feature type="chain" id="PRO_0000204181" description="Regulator of G-protein signaling 2">
    <location>
        <begin position="1"/>
        <end position="211"/>
    </location>
</feature>
<feature type="domain" description="RGS" evidence="3">
    <location>
        <begin position="83"/>
        <end position="199"/>
    </location>
</feature>
<feature type="region of interest" description="Necessary for membrane association" evidence="2">
    <location>
        <begin position="32"/>
        <end position="66"/>
    </location>
</feature>
<feature type="region of interest" description="Necessary to inhibit protein synthesis" evidence="2">
    <location>
        <begin position="79"/>
        <end position="116"/>
    </location>
</feature>
<sequence length="211" mass="24323">MQSAMFLAVQHDCVPMDKSAGNGPKVEEKREKMKRTLLKDWKTRLSYFLQNSSTPGKPKTGKKSKQQTFIKPSPEEALLWAEAFDELLASKYGLAAFRAFLKSEFCEENIEFWLACEDFKKTKSPQKLSSKARKIYTDFIEKEAPKEINIDFQTKTLIAQNIQEATSGCFTTAQKRVYSLMENNSYPRFLESEFYQDLCKKPQITTEPHAT</sequence>
<keyword id="KW-0131">Cell cycle</keyword>
<keyword id="KW-1003">Cell membrane</keyword>
<keyword id="KW-0963">Cytoplasm</keyword>
<keyword id="KW-0343">GTPase activation</keyword>
<keyword id="KW-0472">Membrane</keyword>
<keyword id="KW-0539">Nucleus</keyword>
<keyword id="KW-0597">Phosphoprotein</keyword>
<keyword id="KW-1185">Reference proteome</keyword>
<keyword id="KW-0734">Signal transduction inhibitor</keyword>
<keyword id="KW-0810">Translation regulation</keyword>
<proteinExistence type="evidence at transcript level"/>
<gene>
    <name type="primary">Rgs2</name>
</gene>